<gene>
    <name evidence="9" type="primary">phm-2</name>
    <name evidence="9" type="ORF">F32B4.4</name>
</gene>
<protein>
    <recommendedName>
        <fullName evidence="9">Pharyngeal muscle protein 2</fullName>
    </recommendedName>
</protein>
<reference evidence="8" key="1">
    <citation type="journal article" date="1998" name="Science">
        <title>Genome sequence of the nematode C. elegans: a platform for investigating biology.</title>
        <authorList>
            <consortium name="The C. elegans sequencing consortium"/>
        </authorList>
    </citation>
    <scope>NUCLEOTIDE SEQUENCE [LARGE SCALE GENOMIC DNA]</scope>
    <source>
        <strain evidence="8">Bristol N2</strain>
    </source>
</reference>
<reference evidence="7" key="2">
    <citation type="journal article" date="1993" name="Genetics">
        <title>The genetics of feeding in Caenorhabditis elegans.</title>
        <authorList>
            <person name="Avery L."/>
        </authorList>
    </citation>
    <scope>FUNCTION</scope>
    <scope>DISRUPTION PHENOTYPE</scope>
</reference>
<reference evidence="7" key="3">
    <citation type="journal article" date="2011" name="Genetics">
        <title>Identification of mutations that delay somatic or reproductive aging of Caenorhabditis elegans.</title>
        <authorList>
            <person name="Hughes S.E."/>
            <person name="Huang C."/>
            <person name="Kornfeld K."/>
        </authorList>
    </citation>
    <scope>FUNCTION</scope>
    <scope>MUTAGENESIS OF 44-ARG--TYR-1073</scope>
</reference>
<reference evidence="7" key="4">
    <citation type="journal article" date="2019" name="Dev. Cell">
        <title>Lifespan extension in C. elegans caused by bacterial colonization of the intestine and subsequent activation of an innate immune response.</title>
        <authorList>
            <person name="Kumar S."/>
            <person name="Egan B.M."/>
            <person name="Kocsisova Z."/>
            <person name="Schneider D.L."/>
            <person name="Murphy J.T."/>
            <person name="Diwan A."/>
            <person name="Kornfeld K."/>
        </authorList>
    </citation>
    <scope>FUNCTION</scope>
    <scope>SUBCELLULAR LOCATION</scope>
    <scope>TISSUE SPECIFICITY</scope>
    <scope>DISRUPTION PHENOTYPE</scope>
    <scope>MUTAGENESIS OF 44-ARG--TYR-1073</scope>
</reference>
<comment type="function">
    <text evidence="4 5 6">Involved in pharyngeal muscle development and ensures pharyngeal grinder function during feeding (PubMed:21750263, PubMed:30965033, PubMed:8462849). Plays a role in the defense against the accumulation of ingested live pathogenic bacteria in the intestine (PubMed:30965033). Has a role in the determination of life span (PubMed:30965033).</text>
</comment>
<comment type="interaction">
    <interactant intactId="EBI-320780">
        <id>O62203</id>
    </interactant>
    <interactant intactId="EBI-315750">
        <id>Q10929</id>
        <label>abi-1</label>
    </interactant>
    <organismsDiffer>false</organismsDiffer>
    <experiments>6</experiments>
</comment>
<comment type="interaction">
    <interactant intactId="EBI-320780">
        <id>O62203</id>
    </interactant>
    <interactant intactId="EBI-325337">
        <id>G5EC32</id>
        <label>sorb-1</label>
    </interactant>
    <organismsDiffer>false</organismsDiffer>
    <experiments>7</experiments>
</comment>
<comment type="subcellular location">
    <molecule>Isoform a</molecule>
    <subcellularLocation>
        <location evidence="5">Nucleus</location>
    </subcellularLocation>
</comment>
<comment type="alternative products">
    <event type="alternative splicing"/>
    <isoform>
        <id>O62203-1</id>
        <name evidence="9">a</name>
        <sequence type="displayed"/>
    </isoform>
    <isoform>
        <id>O62203-2</id>
        <name evidence="10">b</name>
        <sequence type="described" ref="VSP_060473"/>
    </isoform>
    <isoform>
        <id>O62203-3</id>
        <name evidence="11">c</name>
        <sequence type="described" ref="VSP_060472"/>
    </isoform>
</comment>
<comment type="tissue specificity">
    <text evidence="5">Expressed in most tissues including the hypodermal, muscle, neuronal, vulval and intestinal tissues (PubMed:30965033). Isoform a: Expressed in the pharynx, nerve ring, intestine, neurons and ventral nerve cord (PubMed:30965033).</text>
</comment>
<comment type="disruption phenotype">
    <text evidence="5 6">Viable, but have an extended lifespan (PubMed:30965033). There is a decrease in early progeny production, resulting in smaller self-fertile brood size, and an increase in late progeny production, which results in an extended self-fertile reproductive lifespan (PubMed:30965033). Defective pharyngeal grinder positioning, which results in feeding defects (PubMed:8462849). Animals also have protruding male spicules (PubMed:8462849).</text>
</comment>
<dbReference type="EMBL" id="BX284601">
    <property type="protein sequence ID" value="CAB04233.3"/>
    <property type="molecule type" value="Genomic_DNA"/>
</dbReference>
<dbReference type="EMBL" id="BX284601">
    <property type="protein sequence ID" value="CAD98731.1"/>
    <property type="molecule type" value="Genomic_DNA"/>
</dbReference>
<dbReference type="EMBL" id="BX284601">
    <property type="protein sequence ID" value="CCA65561.1"/>
    <property type="molecule type" value="Genomic_DNA"/>
</dbReference>
<dbReference type="RefSeq" id="NP_001021440.2">
    <molecule id="O62203-1"/>
    <property type="nucleotide sequence ID" value="NM_001026269.4"/>
</dbReference>
<dbReference type="RefSeq" id="NP_001021441.1">
    <property type="nucleotide sequence ID" value="NM_001026270.3"/>
</dbReference>
<dbReference type="RefSeq" id="NP_001251667.1">
    <molecule id="O62203-3"/>
    <property type="nucleotide sequence ID" value="NM_001264738.3"/>
</dbReference>
<dbReference type="RefSeq" id="NP_001379397.1">
    <molecule id="O62203-2"/>
    <property type="nucleotide sequence ID" value="NM_001392949.1"/>
</dbReference>
<dbReference type="SMR" id="O62203"/>
<dbReference type="DIP" id="DIP-25849N"/>
<dbReference type="FunCoup" id="O62203">
    <property type="interactions" value="579"/>
</dbReference>
<dbReference type="IntAct" id="O62203">
    <property type="interactions" value="18"/>
</dbReference>
<dbReference type="STRING" id="6239.F32B4.4a.1"/>
<dbReference type="PaxDb" id="6239-F32B4.4a"/>
<dbReference type="PeptideAtlas" id="O62203"/>
<dbReference type="EnsemblMetazoa" id="F32B4.4a.1">
    <molecule id="O62203-1"/>
    <property type="protein sequence ID" value="F32B4.4a.1"/>
    <property type="gene ID" value="WBGene00009314"/>
</dbReference>
<dbReference type="EnsemblMetazoa" id="F32B4.4b.1">
    <molecule id="O62203-2"/>
    <property type="protein sequence ID" value="F32B4.4b.1"/>
    <property type="gene ID" value="WBGene00009314"/>
</dbReference>
<dbReference type="EnsemblMetazoa" id="F32B4.4b.2">
    <molecule id="O62203-2"/>
    <property type="protein sequence ID" value="F32B4.4b.2"/>
    <property type="gene ID" value="WBGene00009314"/>
</dbReference>
<dbReference type="EnsemblMetazoa" id="F32B4.4b.3">
    <molecule id="O62203-2"/>
    <property type="protein sequence ID" value="F32B4.4b.3"/>
    <property type="gene ID" value="WBGene00009314"/>
</dbReference>
<dbReference type="EnsemblMetazoa" id="F32B4.4c.1">
    <molecule id="O62203-3"/>
    <property type="protein sequence ID" value="F32B4.4c.1"/>
    <property type="gene ID" value="WBGene00009314"/>
</dbReference>
<dbReference type="GeneID" id="185193"/>
<dbReference type="KEGG" id="cel:CELE_F32B4.4"/>
<dbReference type="UCSC" id="F32B4.4b.1">
    <property type="organism name" value="c. elegans"/>
</dbReference>
<dbReference type="AGR" id="WB:WBGene00009314"/>
<dbReference type="CTD" id="185193"/>
<dbReference type="WormBase" id="F32B4.4a">
    <molecule id="O62203-1"/>
    <property type="protein sequence ID" value="CE46007"/>
    <property type="gene ID" value="WBGene00009314"/>
    <property type="gene designation" value="phm-2"/>
</dbReference>
<dbReference type="WormBase" id="F32B4.4b">
    <molecule id="O62203-2"/>
    <property type="protein sequence ID" value="CE34301"/>
    <property type="gene ID" value="WBGene00009314"/>
    <property type="gene designation" value="phm-2"/>
</dbReference>
<dbReference type="WormBase" id="F32B4.4c">
    <molecule id="O62203-3"/>
    <property type="protein sequence ID" value="CE46087"/>
    <property type="gene ID" value="WBGene00009314"/>
    <property type="gene designation" value="phm-2"/>
</dbReference>
<dbReference type="eggNOG" id="KOG4661">
    <property type="taxonomic scope" value="Eukaryota"/>
</dbReference>
<dbReference type="GeneTree" id="ENSGT00940000175782"/>
<dbReference type="HOGENOM" id="CLU_287330_0_0_1"/>
<dbReference type="InParanoid" id="O62203"/>
<dbReference type="OMA" id="HGRKFED"/>
<dbReference type="OrthoDB" id="6159259at2759"/>
<dbReference type="Reactome" id="R-CEL-3899300">
    <property type="pathway name" value="SUMOylation of transcription cofactors"/>
</dbReference>
<dbReference type="SignaLink" id="O62203"/>
<dbReference type="PRO" id="PR:O62203"/>
<dbReference type="Proteomes" id="UP000001940">
    <property type="component" value="Chromosome I"/>
</dbReference>
<dbReference type="Bgee" id="WBGene00009314">
    <property type="expression patterns" value="Expressed in pharyngeal muscle cell (C elegans) and 3 other cell types or tissues"/>
</dbReference>
<dbReference type="GO" id="GO:0005634">
    <property type="term" value="C:nucleus"/>
    <property type="evidence" value="ECO:0000318"/>
    <property type="project" value="GO_Central"/>
</dbReference>
<dbReference type="GO" id="GO:0003723">
    <property type="term" value="F:RNA binding"/>
    <property type="evidence" value="ECO:0007669"/>
    <property type="project" value="UniProtKB-KW"/>
</dbReference>
<dbReference type="GO" id="GO:0043565">
    <property type="term" value="F:sequence-specific DNA binding"/>
    <property type="evidence" value="ECO:0000318"/>
    <property type="project" value="GO_Central"/>
</dbReference>
<dbReference type="GO" id="GO:0007586">
    <property type="term" value="P:digestion"/>
    <property type="evidence" value="ECO:0007669"/>
    <property type="project" value="UniProtKB-KW"/>
</dbReference>
<dbReference type="GO" id="GO:0050684">
    <property type="term" value="P:regulation of mRNA processing"/>
    <property type="evidence" value="ECO:0000318"/>
    <property type="project" value="GO_Central"/>
</dbReference>
<dbReference type="GO" id="GO:0006357">
    <property type="term" value="P:regulation of transcription by RNA polymerase II"/>
    <property type="evidence" value="ECO:0000318"/>
    <property type="project" value="GO_Central"/>
</dbReference>
<dbReference type="CDD" id="cd12417">
    <property type="entry name" value="RRM_SAFB_like"/>
    <property type="match status" value="1"/>
</dbReference>
<dbReference type="Gene3D" id="3.30.70.330">
    <property type="match status" value="1"/>
</dbReference>
<dbReference type="Gene3D" id="1.10.720.30">
    <property type="entry name" value="SAP domain"/>
    <property type="match status" value="1"/>
</dbReference>
<dbReference type="InterPro" id="IPR012677">
    <property type="entry name" value="Nucleotide-bd_a/b_plait_sf"/>
</dbReference>
<dbReference type="InterPro" id="IPR035979">
    <property type="entry name" value="RBD_domain_sf"/>
</dbReference>
<dbReference type="InterPro" id="IPR000504">
    <property type="entry name" value="RRM_dom"/>
</dbReference>
<dbReference type="InterPro" id="IPR051738">
    <property type="entry name" value="SAF_Modulators"/>
</dbReference>
<dbReference type="InterPro" id="IPR003034">
    <property type="entry name" value="SAP_dom"/>
</dbReference>
<dbReference type="InterPro" id="IPR036361">
    <property type="entry name" value="SAP_dom_sf"/>
</dbReference>
<dbReference type="PANTHER" id="PTHR15683:SF8">
    <property type="entry name" value="SCAFFOLD ATTACHMENT FACTOR B, ISOFORM B"/>
    <property type="match status" value="1"/>
</dbReference>
<dbReference type="PANTHER" id="PTHR15683">
    <property type="entry name" value="SCAFFOLD ATTACHMENT FACTOR B-RELATED"/>
    <property type="match status" value="1"/>
</dbReference>
<dbReference type="Pfam" id="PF00076">
    <property type="entry name" value="RRM_1"/>
    <property type="match status" value="1"/>
</dbReference>
<dbReference type="Pfam" id="PF02037">
    <property type="entry name" value="SAP"/>
    <property type="match status" value="1"/>
</dbReference>
<dbReference type="SMART" id="SM00360">
    <property type="entry name" value="RRM"/>
    <property type="match status" value="1"/>
</dbReference>
<dbReference type="SMART" id="SM00513">
    <property type="entry name" value="SAP"/>
    <property type="match status" value="1"/>
</dbReference>
<dbReference type="SUPFAM" id="SSF54928">
    <property type="entry name" value="RNA-binding domain, RBD"/>
    <property type="match status" value="1"/>
</dbReference>
<dbReference type="SUPFAM" id="SSF68906">
    <property type="entry name" value="SAP domain"/>
    <property type="match status" value="1"/>
</dbReference>
<dbReference type="PROSITE" id="PS50102">
    <property type="entry name" value="RRM"/>
    <property type="match status" value="1"/>
</dbReference>
<dbReference type="PROSITE" id="PS50800">
    <property type="entry name" value="SAP"/>
    <property type="match status" value="1"/>
</dbReference>
<organism evidence="8">
    <name type="scientific">Caenorhabditis elegans</name>
    <dbReference type="NCBI Taxonomy" id="6239"/>
    <lineage>
        <taxon>Eukaryota</taxon>
        <taxon>Metazoa</taxon>
        <taxon>Ecdysozoa</taxon>
        <taxon>Nematoda</taxon>
        <taxon>Chromadorea</taxon>
        <taxon>Rhabditida</taxon>
        <taxon>Rhabditina</taxon>
        <taxon>Rhabditomorpha</taxon>
        <taxon>Rhabditoidea</taxon>
        <taxon>Rhabditidae</taxon>
        <taxon>Peloderinae</taxon>
        <taxon>Caenorhabditis</taxon>
    </lineage>
</organism>
<name>PHM2_CAEEL</name>
<feature type="chain" id="PRO_0000448940" description="Pharyngeal muscle protein 2">
    <location>
        <begin position="1"/>
        <end position="1073"/>
    </location>
</feature>
<feature type="domain" description="SAP" evidence="2">
    <location>
        <begin position="9"/>
        <end position="43"/>
    </location>
</feature>
<feature type="domain" description="RRM" evidence="1">
    <location>
        <begin position="396"/>
        <end position="478"/>
    </location>
</feature>
<feature type="region of interest" description="Disordered" evidence="3">
    <location>
        <begin position="59"/>
        <end position="186"/>
    </location>
</feature>
<feature type="region of interest" description="Disordered" evidence="3">
    <location>
        <begin position="207"/>
        <end position="305"/>
    </location>
</feature>
<feature type="region of interest" description="Disordered" evidence="3">
    <location>
        <begin position="337"/>
        <end position="388"/>
    </location>
</feature>
<feature type="region of interest" description="Disordered" evidence="3">
    <location>
        <begin position="481"/>
        <end position="759"/>
    </location>
</feature>
<feature type="region of interest" description="Disordered" evidence="3">
    <location>
        <begin position="845"/>
        <end position="917"/>
    </location>
</feature>
<feature type="region of interest" description="Disordered" evidence="3">
    <location>
        <begin position="1015"/>
        <end position="1073"/>
    </location>
</feature>
<feature type="compositionally biased region" description="Acidic residues" evidence="3">
    <location>
        <begin position="91"/>
        <end position="111"/>
    </location>
</feature>
<feature type="compositionally biased region" description="Basic and acidic residues" evidence="3">
    <location>
        <begin position="112"/>
        <end position="127"/>
    </location>
</feature>
<feature type="compositionally biased region" description="Acidic residues" evidence="3">
    <location>
        <begin position="128"/>
        <end position="151"/>
    </location>
</feature>
<feature type="compositionally biased region" description="Basic and acidic residues" evidence="3">
    <location>
        <begin position="156"/>
        <end position="182"/>
    </location>
</feature>
<feature type="compositionally biased region" description="Basic and acidic residues" evidence="3">
    <location>
        <begin position="207"/>
        <end position="217"/>
    </location>
</feature>
<feature type="compositionally biased region" description="Acidic residues" evidence="3">
    <location>
        <begin position="223"/>
        <end position="232"/>
    </location>
</feature>
<feature type="compositionally biased region" description="Acidic residues" evidence="3">
    <location>
        <begin position="248"/>
        <end position="265"/>
    </location>
</feature>
<feature type="compositionally biased region" description="Basic and acidic residues" evidence="3">
    <location>
        <begin position="277"/>
        <end position="293"/>
    </location>
</feature>
<feature type="compositionally biased region" description="Low complexity" evidence="3">
    <location>
        <begin position="366"/>
        <end position="386"/>
    </location>
</feature>
<feature type="compositionally biased region" description="Low complexity" evidence="3">
    <location>
        <begin position="496"/>
        <end position="505"/>
    </location>
</feature>
<feature type="compositionally biased region" description="Low complexity" evidence="3">
    <location>
        <begin position="513"/>
        <end position="524"/>
    </location>
</feature>
<feature type="compositionally biased region" description="Basic and acidic residues" evidence="3">
    <location>
        <begin position="573"/>
        <end position="587"/>
    </location>
</feature>
<feature type="compositionally biased region" description="Low complexity" evidence="3">
    <location>
        <begin position="588"/>
        <end position="622"/>
    </location>
</feature>
<feature type="compositionally biased region" description="Polar residues" evidence="3">
    <location>
        <begin position="674"/>
        <end position="689"/>
    </location>
</feature>
<feature type="compositionally biased region" description="Basic and acidic residues" evidence="3">
    <location>
        <begin position="707"/>
        <end position="727"/>
    </location>
</feature>
<feature type="compositionally biased region" description="Basic and acidic residues" evidence="3">
    <location>
        <begin position="742"/>
        <end position="759"/>
    </location>
</feature>
<feature type="compositionally biased region" description="Low complexity" evidence="3">
    <location>
        <begin position="901"/>
        <end position="917"/>
    </location>
</feature>
<feature type="compositionally biased region" description="Low complexity" evidence="3">
    <location>
        <begin position="1015"/>
        <end position="1026"/>
    </location>
</feature>
<feature type="compositionally biased region" description="Low complexity" evidence="3">
    <location>
        <begin position="1034"/>
        <end position="1060"/>
    </location>
</feature>
<feature type="splice variant" id="VSP_060472" description="In isoform c." evidence="7">
    <location>
        <begin position="1"/>
        <end position="71"/>
    </location>
</feature>
<feature type="splice variant" id="VSP_060473" description="In isoform b." evidence="7">
    <original>PLESGKLINDLRVSELKTELEKRGLSTQGVKVVLTVRLNKALRDEGLDPADHVFEHAVSPMKKSTRRSNEMARAAAAAAAEKVEKGAGDEGNDENVLVEEKEEEEEEEDSHDLQIIEDHELEVPSDEKDDTLVEDEEFEEAEQVEPEPEAVEPVVEEKPEEKLEEKPEEKLEEKPEEKPVEPEVVTVEEPVAEVIEVEKAVAEPVELKEKPEKEPEVVLVEEPVEQLENEPEVVPMEVEEAKKSDEQDGEDEFEEDDSSSDIEIIEPTLQESEPLAEEKVEKKEKKPEEIPHNLEQNEPISMETEEKVEEEVIILNSSINNVSQDDEIVLDYEEDLLEDPLDEPIEQKEPKAAEPTPKQLQKVEASTPQATPSKAASSSAGSGKSMLFGDDVKKTSIWIRGMTPATKASSVK</original>
    <variation>RM</variation>
    <location>
        <begin position="2"/>
        <end position="413"/>
    </location>
</feature>
<feature type="mutagenesis site" description="In am117; extended lifespan, decrease in early progeny production, resulting in smaller self-fertile brood size, and an increase in late progeny production, which results in an extended self-fertile reproductive lifespan. Increased movement characterized by an increased number of body bends per minute. Animals are thinner and smaller with a reduced body volume (also known as a scrawny phenotype), and this is most likely due to heightened bacteria avoidance behavior and impaired food digestion. Older animals exhibit increased pharyngeal pumping. Abnormal pharyngeal grinder morphology and defective function results in the accumulation of pathogenic bacteria, such as E.coli, in the intestine. Accumulation of the transcription factor hlh-30 in the nucleus following exposure to E.coli, which likely leads to increased expression of pathogen response genes including clec-7, clec-60 and clec-82. Reduced survival following exposure to Gram-negative bacteria P.aeruginosa." evidence="4 5">
    <location>
        <begin position="44"/>
        <end position="1073"/>
    </location>
</feature>
<sequence>MPLESGKLINDLRVSELKTELEKRGLSTQGVKVVLTVRLNKALRDEGLDPADHVFEHAVSPMKKSTRRSNEMARAAAAAAAEKVEKGAGDEGNDENVLVEEKEEEEEEEDSHDLQIIEDHELEVPSDEKDDTLVEDEEFEEAEQVEPEPEAVEPVVEEKPEEKLEEKPEEKLEEKPEEKPVEPEVVTVEEPVAEVIEVEKAVAEPVELKEKPEKEPEVVLVEEPVEQLENEPEVVPMEVEEAKKSDEQDGEDEFEEDDSSSDIEIIEPTLQESEPLAEEKVEKKEKKPEEIPHNLEQNEPISMETEEKVEEEVIILNSSINNVSQDDEIVLDYEEDLLEDPLDEPIEQKEPKAAEPTPKQLQKVEASTPQATPSKAASSSAGSGKSMLFGDDVKKTSIWIRGMTPATKASSVKQLASQYGKVIQSKIFNSKAADANGDVKNCFALIQFADVTAMELAMTSLHQKNYQGRVLRVEKVSESHLTSSAEKLAREKHVAEAASTMSTSPAPTPTPEPVVTTTTTTSAAPKRKEPIHAPESSSSEGQRAKRRAIEAPVRSRSRSRGGGGEPRSSRKPITFDREEESNRDSRRTIAAAPPARTSRMARSPLRAPLRAARGSESSRSSTRGGGGGGESLTISSRVDTSGCRGGAIKRSVERSVPNNISTSELRRKHHQIHVTVQQDAPRASYQTEQYARERSSSTTTSSRRRQVSPDRSEQRRHRDEPPPRRAPQEQPSRRRGASPPEPPRRQEGARRSEEPERRRLFDEREQLAHIMAAKDMYAEQQKIRAEKALIAFQMQQLEKKKLEAELQIAQKALLMQQAALGGGGALVVDGGALVAGGGAVGYHHQEHRSSYGGGGSSSNGGSSNRRRQTRRSPSPPQQHHSSSRRQRRDSGGAGRYRQSTSSSNSNRNSNSGGRNLVVTATTTNNTNATNAGRSYGIQSVPDASSYSTNNYQQRSSAASAYDLQITATMPQAGAANSGAAYHQPYGNVYQHNTAAYPVWGGLDAQGHMAMDTNWSQNAATPSTSTSSGGGGGQQWQQQSYGSNQHQHHQNNNSSQPSSSNRRGNDYGNYRGNY</sequence>
<proteinExistence type="evidence at protein level"/>
<keyword id="KW-0025">Alternative splicing</keyword>
<keyword id="KW-0222">Digestion</keyword>
<keyword id="KW-0539">Nucleus</keyword>
<keyword id="KW-1185">Reference proteome</keyword>
<keyword id="KW-0694">RNA-binding</keyword>
<evidence type="ECO:0000255" key="1">
    <source>
        <dbReference type="PROSITE-ProRule" id="PRU00176"/>
    </source>
</evidence>
<evidence type="ECO:0000255" key="2">
    <source>
        <dbReference type="PROSITE-ProRule" id="PRU00186"/>
    </source>
</evidence>
<evidence type="ECO:0000256" key="3">
    <source>
        <dbReference type="SAM" id="MobiDB-lite"/>
    </source>
</evidence>
<evidence type="ECO:0000269" key="4">
    <source>
    </source>
</evidence>
<evidence type="ECO:0000269" key="5">
    <source>
    </source>
</evidence>
<evidence type="ECO:0000269" key="6">
    <source>
    </source>
</evidence>
<evidence type="ECO:0000305" key="7"/>
<evidence type="ECO:0000312" key="8">
    <source>
        <dbReference type="Proteomes" id="UP000001940"/>
    </source>
</evidence>
<evidence type="ECO:0000312" key="9">
    <source>
        <dbReference type="WormBase" id="F32B4.4a"/>
    </source>
</evidence>
<evidence type="ECO:0000312" key="10">
    <source>
        <dbReference type="WormBase" id="F32B4.4b"/>
    </source>
</evidence>
<evidence type="ECO:0000312" key="11">
    <source>
        <dbReference type="WormBase" id="F32B4.4c"/>
    </source>
</evidence>
<accession>O62203</accession>
<accession>F5GUF6</accession>
<accession>Q7Z0X2</accession>